<sequence length="312" mass="35777">MPASHEASNYDEVSMQQSMLFSDGLQDLKNLRAQLYSAAEYFELSYTTDDKKQIVVETLKDYAVKALVNTVDHLGSVTYKVNDFIDEKVDEVSETELRVSCIEQRLRMCQEYMDHEGRSQQSLVIDTPKFHKRYILPAGEIMTATNLEKLKYFGSSLEDADDWNQFRNAVRATIRETPPPPVRKSTSQSSSPRQPPQRSATFSFTSTIPKKEQDKRSVSPHRFPLLRSGSVATRKSASISRPTTPSKSRSITPIRYPSEPRRSASVRVAFEKDNQKETEQQQPSKSKRLLKALLSRRKTKKDDTLYTFLDEY</sequence>
<evidence type="ECO:0000250" key="1"/>
<evidence type="ECO:0000256" key="2">
    <source>
        <dbReference type="SAM" id="MobiDB-lite"/>
    </source>
</evidence>
<evidence type="ECO:0000303" key="3">
    <source>
    </source>
</evidence>
<evidence type="ECO:0000305" key="4"/>
<feature type="chain" id="PRO_0000191795" description="Protein ABIL2">
    <location>
        <begin position="1"/>
        <end position="312"/>
    </location>
</feature>
<feature type="region of interest" description="Disordered" evidence="2">
    <location>
        <begin position="173"/>
        <end position="287"/>
    </location>
</feature>
<feature type="compositionally biased region" description="Low complexity" evidence="2">
    <location>
        <begin position="183"/>
        <end position="199"/>
    </location>
</feature>
<feature type="compositionally biased region" description="Polar residues" evidence="2">
    <location>
        <begin position="230"/>
        <end position="251"/>
    </location>
</feature>
<feature type="compositionally biased region" description="Basic and acidic residues" evidence="2">
    <location>
        <begin position="269"/>
        <end position="279"/>
    </location>
</feature>
<feature type="splice variant" id="VSP_031020" description="In isoform 2." evidence="3">
    <location>
        <begin position="1"/>
        <end position="132"/>
    </location>
</feature>
<feature type="splice variant" id="VSP_031021" description="In isoform 2." evidence="3">
    <original>RYILP</original>
    <variation>MQSLS</variation>
    <location>
        <begin position="133"/>
        <end position="137"/>
    </location>
</feature>
<accession>Q9M3A3</accession>
<accession>Q8GXQ1</accession>
<reference key="1">
    <citation type="journal article" date="2005" name="Plant Cell">
        <title>DISTORTED3/SCAR2 is a putative Arabidopsis WAVE complex subunit that activates the Arp2/3 complex and is required for epidermal morphogenesis.</title>
        <authorList>
            <person name="Basu D."/>
            <person name="Le J."/>
            <person name="El-Din El-Assal S."/>
            <person name="Huang S."/>
            <person name="Zhang C."/>
            <person name="Mallery E.L."/>
            <person name="Koliantz G."/>
            <person name="Staiger C.J."/>
            <person name="Szymanski D.B."/>
        </authorList>
    </citation>
    <scope>NUCLEOTIDE SEQUENCE [MRNA] (ISOFORM 1)</scope>
</reference>
<reference key="2">
    <citation type="journal article" date="2000" name="Nature">
        <title>Sequence and analysis of chromosome 3 of the plant Arabidopsis thaliana.</title>
        <authorList>
            <person name="Salanoubat M."/>
            <person name="Lemcke K."/>
            <person name="Rieger M."/>
            <person name="Ansorge W."/>
            <person name="Unseld M."/>
            <person name="Fartmann B."/>
            <person name="Valle G."/>
            <person name="Bloecker H."/>
            <person name="Perez-Alonso M."/>
            <person name="Obermaier B."/>
            <person name="Delseny M."/>
            <person name="Boutry M."/>
            <person name="Grivell L.A."/>
            <person name="Mache R."/>
            <person name="Puigdomenech P."/>
            <person name="De Simone V."/>
            <person name="Choisne N."/>
            <person name="Artiguenave F."/>
            <person name="Robert C."/>
            <person name="Brottier P."/>
            <person name="Wincker P."/>
            <person name="Cattolico L."/>
            <person name="Weissenbach J."/>
            <person name="Saurin W."/>
            <person name="Quetier F."/>
            <person name="Schaefer M."/>
            <person name="Mueller-Auer S."/>
            <person name="Gabel C."/>
            <person name="Fuchs M."/>
            <person name="Benes V."/>
            <person name="Wurmbach E."/>
            <person name="Drzonek H."/>
            <person name="Erfle H."/>
            <person name="Jordan N."/>
            <person name="Bangert S."/>
            <person name="Wiedelmann R."/>
            <person name="Kranz H."/>
            <person name="Voss H."/>
            <person name="Holland R."/>
            <person name="Brandt P."/>
            <person name="Nyakatura G."/>
            <person name="Vezzi A."/>
            <person name="D'Angelo M."/>
            <person name="Pallavicini A."/>
            <person name="Toppo S."/>
            <person name="Simionati B."/>
            <person name="Conrad A."/>
            <person name="Hornischer K."/>
            <person name="Kauer G."/>
            <person name="Loehnert T.-H."/>
            <person name="Nordsiek G."/>
            <person name="Reichelt J."/>
            <person name="Scharfe M."/>
            <person name="Schoen O."/>
            <person name="Bargues M."/>
            <person name="Terol J."/>
            <person name="Climent J."/>
            <person name="Navarro P."/>
            <person name="Collado C."/>
            <person name="Perez-Perez A."/>
            <person name="Ottenwaelder B."/>
            <person name="Duchemin D."/>
            <person name="Cooke R."/>
            <person name="Laudie M."/>
            <person name="Berger-Llauro C."/>
            <person name="Purnelle B."/>
            <person name="Masuy D."/>
            <person name="de Haan M."/>
            <person name="Maarse A.C."/>
            <person name="Alcaraz J.-P."/>
            <person name="Cottet A."/>
            <person name="Casacuberta E."/>
            <person name="Monfort A."/>
            <person name="Argiriou A."/>
            <person name="Flores M."/>
            <person name="Liguori R."/>
            <person name="Vitale D."/>
            <person name="Mannhaupt G."/>
            <person name="Haase D."/>
            <person name="Schoof H."/>
            <person name="Rudd S."/>
            <person name="Zaccaria P."/>
            <person name="Mewes H.-W."/>
            <person name="Mayer K.F.X."/>
            <person name="Kaul S."/>
            <person name="Town C.D."/>
            <person name="Koo H.L."/>
            <person name="Tallon L.J."/>
            <person name="Jenkins J."/>
            <person name="Rooney T."/>
            <person name="Rizzo M."/>
            <person name="Walts A."/>
            <person name="Utterback T."/>
            <person name="Fujii C.Y."/>
            <person name="Shea T.P."/>
            <person name="Creasy T.H."/>
            <person name="Haas B."/>
            <person name="Maiti R."/>
            <person name="Wu D."/>
            <person name="Peterson J."/>
            <person name="Van Aken S."/>
            <person name="Pai G."/>
            <person name="Militscher J."/>
            <person name="Sellers P."/>
            <person name="Gill J.E."/>
            <person name="Feldblyum T.V."/>
            <person name="Preuss D."/>
            <person name="Lin X."/>
            <person name="Nierman W.C."/>
            <person name="Salzberg S.L."/>
            <person name="White O."/>
            <person name="Venter J.C."/>
            <person name="Fraser C.M."/>
            <person name="Kaneko T."/>
            <person name="Nakamura Y."/>
            <person name="Sato S."/>
            <person name="Kato T."/>
            <person name="Asamizu E."/>
            <person name="Sasamoto S."/>
            <person name="Kimura T."/>
            <person name="Idesawa K."/>
            <person name="Kawashima K."/>
            <person name="Kishida Y."/>
            <person name="Kiyokawa C."/>
            <person name="Kohara M."/>
            <person name="Matsumoto M."/>
            <person name="Matsuno A."/>
            <person name="Muraki A."/>
            <person name="Nakayama S."/>
            <person name="Nakazaki N."/>
            <person name="Shinpo S."/>
            <person name="Takeuchi C."/>
            <person name="Wada T."/>
            <person name="Watanabe A."/>
            <person name="Yamada M."/>
            <person name="Yasuda M."/>
            <person name="Tabata S."/>
        </authorList>
    </citation>
    <scope>NUCLEOTIDE SEQUENCE [LARGE SCALE GENOMIC DNA]</scope>
    <source>
        <strain>cv. Columbia</strain>
    </source>
</reference>
<reference key="3">
    <citation type="journal article" date="2017" name="Plant J.">
        <title>Araport11: a complete reannotation of the Arabidopsis thaliana reference genome.</title>
        <authorList>
            <person name="Cheng C.Y."/>
            <person name="Krishnakumar V."/>
            <person name="Chan A.P."/>
            <person name="Thibaud-Nissen F."/>
            <person name="Schobel S."/>
            <person name="Town C.D."/>
        </authorList>
    </citation>
    <scope>GENOME REANNOTATION</scope>
    <source>
        <strain>cv. Columbia</strain>
    </source>
</reference>
<reference key="4">
    <citation type="journal article" date="2002" name="Science">
        <title>Functional annotation of a full-length Arabidopsis cDNA collection.</title>
        <authorList>
            <person name="Seki M."/>
            <person name="Narusaka M."/>
            <person name="Kamiya A."/>
            <person name="Ishida J."/>
            <person name="Satou M."/>
            <person name="Sakurai T."/>
            <person name="Nakajima M."/>
            <person name="Enju A."/>
            <person name="Akiyama K."/>
            <person name="Oono Y."/>
            <person name="Muramatsu M."/>
            <person name="Hayashizaki Y."/>
            <person name="Kawai J."/>
            <person name="Carninci P."/>
            <person name="Itoh M."/>
            <person name="Ishii Y."/>
            <person name="Arakawa T."/>
            <person name="Shibata K."/>
            <person name="Shinagawa A."/>
            <person name="Shinozaki K."/>
        </authorList>
    </citation>
    <scope>NUCLEOTIDE SEQUENCE [LARGE SCALE MRNA] (ISOFORM 2)</scope>
    <source>
        <strain>cv. Columbia</strain>
    </source>
</reference>
<proteinExistence type="evidence at transcript level"/>
<protein>
    <recommendedName>
        <fullName>Protein ABIL2</fullName>
    </recommendedName>
    <alternativeName>
        <fullName>Abl interactor-like protein 2</fullName>
        <shortName>AtABIL2</shortName>
    </alternativeName>
</protein>
<organism>
    <name type="scientific">Arabidopsis thaliana</name>
    <name type="common">Mouse-ear cress</name>
    <dbReference type="NCBI Taxonomy" id="3702"/>
    <lineage>
        <taxon>Eukaryota</taxon>
        <taxon>Viridiplantae</taxon>
        <taxon>Streptophyta</taxon>
        <taxon>Embryophyta</taxon>
        <taxon>Tracheophyta</taxon>
        <taxon>Spermatophyta</taxon>
        <taxon>Magnoliopsida</taxon>
        <taxon>eudicotyledons</taxon>
        <taxon>Gunneridae</taxon>
        <taxon>Pentapetalae</taxon>
        <taxon>rosids</taxon>
        <taxon>malvids</taxon>
        <taxon>Brassicales</taxon>
        <taxon>Brassicaceae</taxon>
        <taxon>Camelineae</taxon>
        <taxon>Arabidopsis</taxon>
    </lineage>
</organism>
<name>ABIL2_ARATH</name>
<dbReference type="EMBL" id="AY817013">
    <property type="protein sequence ID" value="AAW49257.1"/>
    <property type="molecule type" value="mRNA"/>
</dbReference>
<dbReference type="EMBL" id="AL132956">
    <property type="protein sequence ID" value="CAB66408.1"/>
    <property type="molecule type" value="Genomic_DNA"/>
</dbReference>
<dbReference type="EMBL" id="CP002686">
    <property type="protein sequence ID" value="AEE78522.1"/>
    <property type="molecule type" value="Genomic_DNA"/>
</dbReference>
<dbReference type="EMBL" id="CP002686">
    <property type="protein sequence ID" value="AEE78523.1"/>
    <property type="molecule type" value="Genomic_DNA"/>
</dbReference>
<dbReference type="EMBL" id="AK118112">
    <property type="protein sequence ID" value="BAC42738.1"/>
    <property type="molecule type" value="mRNA"/>
</dbReference>
<dbReference type="PIR" id="T45834">
    <property type="entry name" value="T45834"/>
</dbReference>
<dbReference type="RefSeq" id="NP_001030832.1">
    <molecule id="Q9M3A3-1"/>
    <property type="nucleotide sequence ID" value="NM_001035755.2"/>
</dbReference>
<dbReference type="RefSeq" id="NP_190498.1">
    <molecule id="Q9M3A3-1"/>
    <property type="nucleotide sequence ID" value="NM_114788.4"/>
</dbReference>
<dbReference type="SMR" id="Q9M3A3"/>
<dbReference type="BioGRID" id="9408">
    <property type="interactions" value="2"/>
</dbReference>
<dbReference type="FunCoup" id="Q9M3A3">
    <property type="interactions" value="689"/>
</dbReference>
<dbReference type="IntAct" id="Q9M3A3">
    <property type="interactions" value="9"/>
</dbReference>
<dbReference type="STRING" id="3702.Q9M3A3"/>
<dbReference type="iPTMnet" id="Q9M3A3"/>
<dbReference type="PaxDb" id="3702-AT3G49290.1"/>
<dbReference type="ProteomicsDB" id="244606">
    <molecule id="Q9M3A3-1"/>
</dbReference>
<dbReference type="EnsemblPlants" id="AT3G49290.1">
    <molecule id="Q9M3A3-1"/>
    <property type="protein sequence ID" value="AT3G49290.1"/>
    <property type="gene ID" value="AT3G49290"/>
</dbReference>
<dbReference type="EnsemblPlants" id="AT3G49290.2">
    <molecule id="Q9M3A3-1"/>
    <property type="protein sequence ID" value="AT3G49290.2"/>
    <property type="gene ID" value="AT3G49290"/>
</dbReference>
<dbReference type="GeneID" id="824090"/>
<dbReference type="Gramene" id="AT3G49290.1">
    <molecule id="Q9M3A3-1"/>
    <property type="protein sequence ID" value="AT3G49290.1"/>
    <property type="gene ID" value="AT3G49290"/>
</dbReference>
<dbReference type="Gramene" id="AT3G49290.2">
    <molecule id="Q9M3A3-1"/>
    <property type="protein sequence ID" value="AT3G49290.2"/>
    <property type="gene ID" value="AT3G49290"/>
</dbReference>
<dbReference type="KEGG" id="ath:AT3G49290"/>
<dbReference type="Araport" id="AT3G49290"/>
<dbReference type="TAIR" id="AT3G49290">
    <property type="gene designation" value="ABIL2"/>
</dbReference>
<dbReference type="eggNOG" id="ENOG502R3IQ">
    <property type="taxonomic scope" value="Eukaryota"/>
</dbReference>
<dbReference type="HOGENOM" id="CLU_054853_1_0_1"/>
<dbReference type="InParanoid" id="Q9M3A3"/>
<dbReference type="OMA" id="YCIQERT"/>
<dbReference type="PhylomeDB" id="Q9M3A3"/>
<dbReference type="PRO" id="PR:Q9M3A3"/>
<dbReference type="Proteomes" id="UP000006548">
    <property type="component" value="Chromosome 3"/>
</dbReference>
<dbReference type="ExpressionAtlas" id="Q9M3A3">
    <property type="expression patterns" value="baseline and differential"/>
</dbReference>
<dbReference type="GO" id="GO:0005737">
    <property type="term" value="C:cytoplasm"/>
    <property type="evidence" value="ECO:0007669"/>
    <property type="project" value="UniProtKB-KW"/>
</dbReference>
<dbReference type="GO" id="GO:0005856">
    <property type="term" value="C:cytoskeleton"/>
    <property type="evidence" value="ECO:0007669"/>
    <property type="project" value="UniProtKB-SubCell"/>
</dbReference>
<dbReference type="Gene3D" id="6.10.140.1620">
    <property type="match status" value="1"/>
</dbReference>
<dbReference type="InterPro" id="IPR028457">
    <property type="entry name" value="ABI"/>
</dbReference>
<dbReference type="PANTHER" id="PTHR10460">
    <property type="entry name" value="ABL INTERACTOR FAMILY MEMBER"/>
    <property type="match status" value="1"/>
</dbReference>
<dbReference type="PANTHER" id="PTHR10460:SF54">
    <property type="entry name" value="PROTEIN ABIL2"/>
    <property type="match status" value="1"/>
</dbReference>
<comment type="function">
    <text evidence="1">Involved in regulation of actin and microtubule organization. Part of a WAVE complex that activates the Arp2/3 complex (By similarity).</text>
</comment>
<comment type="subunit">
    <text evidence="1">Binds SCAR.</text>
</comment>
<comment type="subcellular location">
    <subcellularLocation>
        <location evidence="1">Cytoplasm</location>
        <location evidence="1">Cytoskeleton</location>
    </subcellularLocation>
</comment>
<comment type="alternative products">
    <event type="alternative splicing"/>
    <isoform>
        <id>Q9M3A3-1</id>
        <name>1</name>
        <sequence type="displayed"/>
    </isoform>
    <isoform>
        <id>Q9M3A3-2</id>
        <name>2</name>
        <sequence type="described" ref="VSP_031020 VSP_031021"/>
    </isoform>
</comment>
<comment type="similarity">
    <text evidence="4">Belongs to the ABI family.</text>
</comment>
<gene>
    <name type="primary">ABIL2</name>
    <name type="ordered locus">At3g49290</name>
    <name type="ORF">F2K15.150</name>
</gene>
<keyword id="KW-0025">Alternative splicing</keyword>
<keyword id="KW-0963">Cytoplasm</keyword>
<keyword id="KW-0206">Cytoskeleton</keyword>
<keyword id="KW-1185">Reference proteome</keyword>